<sequence>MLGRSRLALVLLAAAVSCAVAQHAPPWTEDCRKSTYPPSGPTYRGPAPWYTINLDLPPYKRWHELMVDKAPMLKVIVNSLKNMVNTFVPSGKVMQIVDEKLPGLLGNFPGPFEEEMKGIAAVTDIPLGEIISYNIFYEFFTLCTSIVAEDKKGHLIHGRNMDFGVFLGWNINNDTWVITEELKPLTVNLDFQRNNKTVFKASSFAGYVGMLTGFKPGLFSLTLNERFSVNGGYLGILEWILGKKDAMWIGFLTRTVLENSTSYEEAKNILTKTKILAPAYFILGGNQSGEGCVITRDRKESLDVYELDAKQGRWYVVQTNYDRWKNPFFLDDRRTPAKMCLNRTTQENISFENMYDVLSTKPVLNKLTVFTTLIDVTKDQFETYMRDCPDPCIGW</sequence>
<gene>
    <name evidence="2" type="primary">ASAH1</name>
    <name type="ORF">QccE-14484</name>
</gene>
<proteinExistence type="evidence at transcript level"/>
<protein>
    <recommendedName>
        <fullName evidence="4">Acid ceramidase</fullName>
        <shortName>AC</shortName>
        <shortName>ACDase</shortName>
        <shortName>Acid CDase</shortName>
        <ecNumber evidence="2">3.5.1.23</ecNumber>
    </recommendedName>
    <alternativeName>
        <fullName>Acylsphingosine deacylase</fullName>
    </alternativeName>
    <alternativeName>
        <fullName evidence="2">N-acylethanolamine hydrolase ASAH1</fullName>
        <ecNumber evidence="2">3.5.1.-</ecNumber>
    </alternativeName>
    <alternativeName>
        <fullName>N-acylsphingosine amidohydrolase</fullName>
    </alternativeName>
    <component>
        <recommendedName>
            <fullName evidence="2">Acid ceramidase subunit alpha</fullName>
        </recommendedName>
    </component>
    <component>
        <recommendedName>
            <fullName evidence="2">Acid ceramidase subunit beta</fullName>
        </recommendedName>
    </component>
</protein>
<feature type="signal peptide" evidence="3">
    <location>
        <begin position="1"/>
        <end position="21"/>
    </location>
</feature>
<feature type="chain" id="PRO_0000002314" description="Acid ceramidase subunit alpha" evidence="2">
    <location>
        <begin position="22"/>
        <end position="142"/>
    </location>
</feature>
<feature type="chain" id="PRO_0000002315" description="Acid ceramidase subunit beta" evidence="2">
    <location>
        <begin position="143"/>
        <end position="395"/>
    </location>
</feature>
<feature type="active site" description="Nucleophile" evidence="2">
    <location>
        <position position="143"/>
    </location>
</feature>
<feature type="site" description="Important for catalytic activity" evidence="2">
    <location>
        <position position="162"/>
    </location>
</feature>
<feature type="site" description="Important for catalytic activity" evidence="2">
    <location>
        <position position="320"/>
    </location>
</feature>
<feature type="site" description="Important for catalytic activity" evidence="2">
    <location>
        <position position="333"/>
    </location>
</feature>
<feature type="glycosylation site" description="N-linked (GlcNAc...) asparagine" evidence="3">
    <location>
        <position position="173"/>
    </location>
</feature>
<feature type="glycosylation site" description="N-linked (GlcNAc...) asparagine" evidence="3">
    <location>
        <position position="195"/>
    </location>
</feature>
<feature type="glycosylation site" description="N-linked (GlcNAc...) asparagine" evidence="3">
    <location>
        <position position="259"/>
    </location>
</feature>
<feature type="glycosylation site" description="N-linked (GlcNAc...) asparagine" evidence="3">
    <location>
        <position position="286"/>
    </location>
</feature>
<feature type="glycosylation site" description="N-linked (GlcNAc...) asparagine" evidence="3">
    <location>
        <position position="342"/>
    </location>
</feature>
<feature type="glycosylation site" description="N-linked (GlcNAc...) asparagine" evidence="3">
    <location>
        <position position="348"/>
    </location>
</feature>
<feature type="disulfide bond" description="Interchain (between alpha and beta subunits)" evidence="2">
    <location>
        <begin position="31"/>
        <end position="340"/>
    </location>
</feature>
<feature type="disulfide bond" evidence="1">
    <location>
        <begin position="388"/>
        <end position="392"/>
    </location>
</feature>
<reference key="1">
    <citation type="submission" date="2003-10" db="EMBL/GenBank/DDBJ databases">
        <title>Isolation and characterization of cDNA for macaque neurological disease genes.</title>
        <authorList>
            <person name="Kusuda J."/>
            <person name="Osada N."/>
            <person name="Tanuma R."/>
            <person name="Hirata M."/>
            <person name="Sugano S."/>
            <person name="Hashimoto K."/>
        </authorList>
    </citation>
    <scope>NUCLEOTIDE SEQUENCE [LARGE SCALE MRNA]</scope>
    <source>
        <tissue>Brain cortex</tissue>
    </source>
</reference>
<accession>Q60HH4</accession>
<name>ASAH1_MACFA</name>
<evidence type="ECO:0000250" key="1">
    <source>
        <dbReference type="UniProtKB" id="A0A0P6JG37"/>
    </source>
</evidence>
<evidence type="ECO:0000250" key="2">
    <source>
        <dbReference type="UniProtKB" id="Q13510"/>
    </source>
</evidence>
<evidence type="ECO:0000255" key="3"/>
<evidence type="ECO:0000305" key="4"/>
<comment type="function">
    <text evidence="2">Lysosomal ceramidase that hydrolyzes sphingolipid ceramides into sphingosine and free fatty acids at acidic pH (By similarity). Ceramides, sphingosine, and its phosphorylated form sphingosine-1-phosphate are bioactive lipids that mediate cellular signaling pathways regulating several biological processes including cell proliferation, apoptosis and differentiation (By similarity). Has a higher catalytic efficiency towards C12-ceramides versus other ceramides (By similarity). Also catalyzes the reverse reaction allowing the synthesis of ceramides from fatty acids and sphingosine (By similarity). For the reverse synthetic reaction, the natural sphingosine D-erythro isomer is more efficiently utilized as a substrate compared to D-erythro-dihydrosphingosine and D-erythro-phytosphingosine, while the fatty acids with chain lengths of 12 or 14 carbons are the most efficiently used (By similarity). Also has an N-acylethanolamine hydrolase activity (By similarity). By regulating the levels of ceramides, sphingosine and sphingosine-1-phosphate in the epidermis, mediates the calcium-induced differentiation of epidermal keratinocytes (By similarity). Also indirectly regulates tumor necrosis factor/TNF-induced apoptosis (By similarity). By regulating the intracellular balance between ceramides and sphingosine, in adrenocortical cells, probably also acts as a regulator of steroidogenesis (By similarity).</text>
</comment>
<comment type="catalytic activity">
    <reaction evidence="2">
        <text>an N-acylsphing-4-enine + H2O = sphing-4-enine + a fatty acid</text>
        <dbReference type="Rhea" id="RHEA:20856"/>
        <dbReference type="ChEBI" id="CHEBI:15377"/>
        <dbReference type="ChEBI" id="CHEBI:28868"/>
        <dbReference type="ChEBI" id="CHEBI:52639"/>
        <dbReference type="ChEBI" id="CHEBI:57756"/>
        <dbReference type="EC" id="3.5.1.23"/>
    </reaction>
</comment>
<comment type="catalytic activity">
    <reaction evidence="2">
        <text>N-dodecanoylsphing-4-enine + H2O = dodecanoate + sphing-4-enine</text>
        <dbReference type="Rhea" id="RHEA:41291"/>
        <dbReference type="ChEBI" id="CHEBI:15377"/>
        <dbReference type="ChEBI" id="CHEBI:18262"/>
        <dbReference type="ChEBI" id="CHEBI:57756"/>
        <dbReference type="ChEBI" id="CHEBI:72956"/>
    </reaction>
    <physiologicalReaction direction="left-to-right" evidence="2">
        <dbReference type="Rhea" id="RHEA:41292"/>
    </physiologicalReaction>
    <physiologicalReaction direction="right-to-left" evidence="2">
        <dbReference type="Rhea" id="RHEA:41293"/>
    </physiologicalReaction>
</comment>
<comment type="catalytic activity">
    <reaction evidence="2">
        <text>N-tetradecanoylsphing-4-enine + H2O = tetradecanoate + sphing-4-enine</text>
        <dbReference type="Rhea" id="RHEA:41287"/>
        <dbReference type="ChEBI" id="CHEBI:15377"/>
        <dbReference type="ChEBI" id="CHEBI:30807"/>
        <dbReference type="ChEBI" id="CHEBI:57756"/>
        <dbReference type="ChEBI" id="CHEBI:72957"/>
    </reaction>
    <physiologicalReaction direction="right-to-left" evidence="2">
        <dbReference type="Rhea" id="RHEA:41289"/>
    </physiologicalReaction>
</comment>
<comment type="catalytic activity">
    <reaction evidence="2">
        <text>N-hexadecanoylsphing-4-enine + H2O = sphing-4-enine + hexadecanoate</text>
        <dbReference type="Rhea" id="RHEA:38891"/>
        <dbReference type="ChEBI" id="CHEBI:7896"/>
        <dbReference type="ChEBI" id="CHEBI:15377"/>
        <dbReference type="ChEBI" id="CHEBI:57756"/>
        <dbReference type="ChEBI" id="CHEBI:72959"/>
    </reaction>
    <physiologicalReaction direction="left-to-right" evidence="2">
        <dbReference type="Rhea" id="RHEA:38892"/>
    </physiologicalReaction>
    <physiologicalReaction direction="right-to-left" evidence="2">
        <dbReference type="Rhea" id="RHEA:38893"/>
    </physiologicalReaction>
</comment>
<comment type="catalytic activity">
    <reaction evidence="2">
        <text>N-octadecanoylsphing-4-enine + H2O = sphing-4-enine + octadecanoate</text>
        <dbReference type="Rhea" id="RHEA:41279"/>
        <dbReference type="ChEBI" id="CHEBI:15377"/>
        <dbReference type="ChEBI" id="CHEBI:25629"/>
        <dbReference type="ChEBI" id="CHEBI:57756"/>
        <dbReference type="ChEBI" id="CHEBI:72961"/>
    </reaction>
    <physiologicalReaction direction="left-to-right" evidence="2">
        <dbReference type="Rhea" id="RHEA:41280"/>
    </physiologicalReaction>
    <physiologicalReaction direction="right-to-left" evidence="2">
        <dbReference type="Rhea" id="RHEA:41281"/>
    </physiologicalReaction>
</comment>
<comment type="catalytic activity">
    <reaction evidence="2">
        <text>N-dodecanoyl-(4R)-hydroxysphinganine + H2O = (4R)-hydroxysphinganine + dodecanoate</text>
        <dbReference type="Rhea" id="RHEA:41303"/>
        <dbReference type="ChEBI" id="CHEBI:15377"/>
        <dbReference type="ChEBI" id="CHEBI:18262"/>
        <dbReference type="ChEBI" id="CHEBI:64124"/>
        <dbReference type="ChEBI" id="CHEBI:78001"/>
    </reaction>
    <physiologicalReaction direction="right-to-left" evidence="2">
        <dbReference type="Rhea" id="RHEA:41305"/>
    </physiologicalReaction>
</comment>
<comment type="catalytic activity">
    <reaction evidence="2">
        <text>N-(dodecanoyl)-sphinganine + H2O = dodecanoate + sphinganine</text>
        <dbReference type="Rhea" id="RHEA:45448"/>
        <dbReference type="ChEBI" id="CHEBI:15377"/>
        <dbReference type="ChEBI" id="CHEBI:18262"/>
        <dbReference type="ChEBI" id="CHEBI:57817"/>
        <dbReference type="ChEBI" id="CHEBI:85261"/>
    </reaction>
    <physiologicalReaction direction="right-to-left" evidence="2">
        <dbReference type="Rhea" id="RHEA:45450"/>
    </physiologicalReaction>
</comment>
<comment type="catalytic activity">
    <reaction evidence="2">
        <text>N-(acetyl)-sphing-4-enine + H2O = sphing-4-enine + acetate</text>
        <dbReference type="Rhea" id="RHEA:58484"/>
        <dbReference type="ChEBI" id="CHEBI:15377"/>
        <dbReference type="ChEBI" id="CHEBI:30089"/>
        <dbReference type="ChEBI" id="CHEBI:46979"/>
        <dbReference type="ChEBI" id="CHEBI:57756"/>
    </reaction>
    <physiologicalReaction direction="left-to-right" evidence="2">
        <dbReference type="Rhea" id="RHEA:58485"/>
    </physiologicalReaction>
</comment>
<comment type="catalytic activity">
    <reaction evidence="2">
        <text>N-(hexanoyl)sphing-4-enine + H2O = hexanoate + sphing-4-enine</text>
        <dbReference type="Rhea" id="RHEA:41295"/>
        <dbReference type="ChEBI" id="CHEBI:15377"/>
        <dbReference type="ChEBI" id="CHEBI:17120"/>
        <dbReference type="ChEBI" id="CHEBI:57756"/>
        <dbReference type="ChEBI" id="CHEBI:63867"/>
    </reaction>
    <physiologicalReaction direction="left-to-right" evidence="2">
        <dbReference type="Rhea" id="RHEA:41296"/>
    </physiologicalReaction>
</comment>
<comment type="catalytic activity">
    <reaction evidence="2">
        <text>N-octanoylsphing-4-enine + H2O = octanoate + sphing-4-enine</text>
        <dbReference type="Rhea" id="RHEA:45092"/>
        <dbReference type="ChEBI" id="CHEBI:15377"/>
        <dbReference type="ChEBI" id="CHEBI:25646"/>
        <dbReference type="ChEBI" id="CHEBI:45815"/>
        <dbReference type="ChEBI" id="CHEBI:57756"/>
    </reaction>
    <physiologicalReaction direction="left-to-right" evidence="2">
        <dbReference type="Rhea" id="RHEA:45093"/>
    </physiologicalReaction>
</comment>
<comment type="catalytic activity">
    <reaction evidence="2">
        <text>N-(9Z-octadecenoyl)-sphing-4-enine + H2O = sphing-4-enine + (9Z)-octadecenoate</text>
        <dbReference type="Rhea" id="RHEA:41299"/>
        <dbReference type="ChEBI" id="CHEBI:15377"/>
        <dbReference type="ChEBI" id="CHEBI:30823"/>
        <dbReference type="ChEBI" id="CHEBI:57756"/>
        <dbReference type="ChEBI" id="CHEBI:77996"/>
    </reaction>
    <physiologicalReaction direction="left-to-right" evidence="2">
        <dbReference type="Rhea" id="RHEA:41300"/>
    </physiologicalReaction>
</comment>
<comment type="catalytic activity">
    <reaction evidence="2">
        <text>N-dodecanoylethanolamine + H2O = dodecanoate + ethanolamine</text>
        <dbReference type="Rhea" id="RHEA:45456"/>
        <dbReference type="ChEBI" id="CHEBI:15377"/>
        <dbReference type="ChEBI" id="CHEBI:18262"/>
        <dbReference type="ChEBI" id="CHEBI:57603"/>
        <dbReference type="ChEBI" id="CHEBI:85263"/>
    </reaction>
    <physiologicalReaction direction="left-to-right" evidence="2">
        <dbReference type="Rhea" id="RHEA:45457"/>
    </physiologicalReaction>
</comment>
<comment type="pathway">
    <text evidence="2">Lipid metabolism; sphingolipid metabolism.</text>
</comment>
<comment type="subunit">
    <text evidence="2">Heterodimer; disulfide-linked. The heterodimer is composed of the disulfide-linked alpha and beta chains produced by autocatalytic cleavage of the precursor.</text>
</comment>
<comment type="subcellular location">
    <subcellularLocation>
        <location evidence="2">Lysosome</location>
    </subcellularLocation>
    <subcellularLocation>
        <location evidence="2">Secreted</location>
    </subcellularLocation>
    <text evidence="2">Secretion is extremely low and localization to lysosomes is mannose-6-phosphate receptor-dependent.</text>
</comment>
<comment type="PTM">
    <text evidence="2">N-glycosylated.</text>
</comment>
<comment type="PTM">
    <text evidence="2">Proteolytically cleaved into two chains alpha and beta that remain associated via a disulfide bond. Cleavage gives rise to a conformation change that activates the enzyme. The same catalytic Cys residue mediates the autoproteolytic cleavage and subsequent hydrolysis of lipid substrates. The beta chain may undergo an additional C-terminal processing.</text>
</comment>
<comment type="similarity">
    <text evidence="4">Belongs to the acid ceramidase family.</text>
</comment>
<keyword id="KW-1015">Disulfide bond</keyword>
<keyword id="KW-0325">Glycoprotein</keyword>
<keyword id="KW-0378">Hydrolase</keyword>
<keyword id="KW-0443">Lipid metabolism</keyword>
<keyword id="KW-0458">Lysosome</keyword>
<keyword id="KW-1185">Reference proteome</keyword>
<keyword id="KW-0964">Secreted</keyword>
<keyword id="KW-0732">Signal</keyword>
<keyword id="KW-0746">Sphingolipid metabolism</keyword>
<keyword id="KW-0865">Zymogen</keyword>
<dbReference type="EC" id="3.5.1.23" evidence="2"/>
<dbReference type="EC" id="3.5.1.-" evidence="2"/>
<dbReference type="EMBL" id="AB125153">
    <property type="protein sequence ID" value="BAD51941.1"/>
    <property type="molecule type" value="mRNA"/>
</dbReference>
<dbReference type="RefSeq" id="XP_045253897.1">
    <property type="nucleotide sequence ID" value="XM_045397962.2"/>
</dbReference>
<dbReference type="SMR" id="Q60HH4"/>
<dbReference type="STRING" id="9541.ENSMFAP00000045035"/>
<dbReference type="MEROPS" id="C89.001"/>
<dbReference type="GlyCosmos" id="Q60HH4">
    <property type="glycosylation" value="6 sites, No reported glycans"/>
</dbReference>
<dbReference type="GeneID" id="102118393"/>
<dbReference type="VEuPathDB" id="HostDB:ENSMFAG00000039553"/>
<dbReference type="eggNOG" id="ENOG502QVBG">
    <property type="taxonomic scope" value="Eukaryota"/>
</dbReference>
<dbReference type="UniPathway" id="UPA00222"/>
<dbReference type="Proteomes" id="UP000233100">
    <property type="component" value="Chromosome 8"/>
</dbReference>
<dbReference type="GO" id="GO:0005615">
    <property type="term" value="C:extracellular space"/>
    <property type="evidence" value="ECO:0000250"/>
    <property type="project" value="UniProtKB"/>
</dbReference>
<dbReference type="GO" id="GO:0005764">
    <property type="term" value="C:lysosome"/>
    <property type="evidence" value="ECO:0000250"/>
    <property type="project" value="UniProtKB"/>
</dbReference>
<dbReference type="GO" id="GO:0016020">
    <property type="term" value="C:membrane"/>
    <property type="evidence" value="ECO:0007669"/>
    <property type="project" value="GOC"/>
</dbReference>
<dbReference type="GO" id="GO:0017064">
    <property type="term" value="F:fatty acid amide hydrolase activity"/>
    <property type="evidence" value="ECO:0007669"/>
    <property type="project" value="InterPro"/>
</dbReference>
<dbReference type="GO" id="GO:0017040">
    <property type="term" value="F:N-acylsphingosine amidohydrolase activity"/>
    <property type="evidence" value="ECO:0000250"/>
    <property type="project" value="UniProtKB"/>
</dbReference>
<dbReference type="GO" id="GO:0071356">
    <property type="term" value="P:cellular response to tumor necrosis factor"/>
    <property type="evidence" value="ECO:0000250"/>
    <property type="project" value="UniProtKB"/>
</dbReference>
<dbReference type="GO" id="GO:0046513">
    <property type="term" value="P:ceramide biosynthetic process"/>
    <property type="evidence" value="ECO:0000250"/>
    <property type="project" value="UniProtKB"/>
</dbReference>
<dbReference type="GO" id="GO:0046514">
    <property type="term" value="P:ceramide catabolic process"/>
    <property type="evidence" value="ECO:0000250"/>
    <property type="project" value="UniProtKB"/>
</dbReference>
<dbReference type="GO" id="GO:0006631">
    <property type="term" value="P:fatty acid metabolic process"/>
    <property type="evidence" value="ECO:0007669"/>
    <property type="project" value="InterPro"/>
</dbReference>
<dbReference type="GO" id="GO:0030216">
    <property type="term" value="P:keratinocyte differentiation"/>
    <property type="evidence" value="ECO:0000250"/>
    <property type="project" value="UniProtKB"/>
</dbReference>
<dbReference type="GO" id="GO:0062098">
    <property type="term" value="P:regulation of programmed necrotic cell death"/>
    <property type="evidence" value="ECO:0000250"/>
    <property type="project" value="UniProtKB"/>
</dbReference>
<dbReference type="GO" id="GO:0050810">
    <property type="term" value="P:regulation of steroid biosynthetic process"/>
    <property type="evidence" value="ECO:0000250"/>
    <property type="project" value="UniProtKB"/>
</dbReference>
<dbReference type="GO" id="GO:0046512">
    <property type="term" value="P:sphingosine biosynthetic process"/>
    <property type="evidence" value="ECO:0000250"/>
    <property type="project" value="UniProtKB"/>
</dbReference>
<dbReference type="CDD" id="cd01903">
    <property type="entry name" value="Ntn_AC_NAAA"/>
    <property type="match status" value="1"/>
</dbReference>
<dbReference type="FunFam" id="3.60.60.10:FF:000002">
    <property type="entry name" value="N-acylsphingosine amidohydrolase 1"/>
    <property type="match status" value="1"/>
</dbReference>
<dbReference type="Gene3D" id="3.60.60.10">
    <property type="entry name" value="Penicillin V Acylase, Chain A"/>
    <property type="match status" value="1"/>
</dbReference>
<dbReference type="InterPro" id="IPR016699">
    <property type="entry name" value="Acid_ceramidase-like"/>
</dbReference>
<dbReference type="InterPro" id="IPR029130">
    <property type="entry name" value="Acid_ceramidase_N"/>
</dbReference>
<dbReference type="InterPro" id="IPR029132">
    <property type="entry name" value="CBAH/NAAA_C"/>
</dbReference>
<dbReference type="PANTHER" id="PTHR28583">
    <property type="entry name" value="ACID AMIDASE"/>
    <property type="match status" value="1"/>
</dbReference>
<dbReference type="PANTHER" id="PTHR28583:SF1">
    <property type="entry name" value="ACID CERAMIDASE"/>
    <property type="match status" value="1"/>
</dbReference>
<dbReference type="Pfam" id="PF02275">
    <property type="entry name" value="CBAH"/>
    <property type="match status" value="1"/>
</dbReference>
<dbReference type="Pfam" id="PF15508">
    <property type="entry name" value="NAAA-beta"/>
    <property type="match status" value="1"/>
</dbReference>
<dbReference type="PIRSF" id="PIRSF017632">
    <property type="entry name" value="Acid_ceramidase-like"/>
    <property type="match status" value="1"/>
</dbReference>
<organism>
    <name type="scientific">Macaca fascicularis</name>
    <name type="common">Crab-eating macaque</name>
    <name type="synonym">Cynomolgus monkey</name>
    <dbReference type="NCBI Taxonomy" id="9541"/>
    <lineage>
        <taxon>Eukaryota</taxon>
        <taxon>Metazoa</taxon>
        <taxon>Chordata</taxon>
        <taxon>Craniata</taxon>
        <taxon>Vertebrata</taxon>
        <taxon>Euteleostomi</taxon>
        <taxon>Mammalia</taxon>
        <taxon>Eutheria</taxon>
        <taxon>Euarchontoglires</taxon>
        <taxon>Primates</taxon>
        <taxon>Haplorrhini</taxon>
        <taxon>Catarrhini</taxon>
        <taxon>Cercopithecidae</taxon>
        <taxon>Cercopithecinae</taxon>
        <taxon>Macaca</taxon>
    </lineage>
</organism>